<keyword id="KW-1003">Cell membrane</keyword>
<keyword id="KW-0210">Decarboxylase</keyword>
<keyword id="KW-0285">Flavoprotein</keyword>
<keyword id="KW-0288">FMN</keyword>
<keyword id="KW-0456">Lyase</keyword>
<keyword id="KW-0464">Manganese</keyword>
<keyword id="KW-0472">Membrane</keyword>
<keyword id="KW-0479">Metal-binding</keyword>
<keyword id="KW-1185">Reference proteome</keyword>
<keyword id="KW-0831">Ubiquinone biosynthesis</keyword>
<reference key="1">
    <citation type="submission" date="2006-08" db="EMBL/GenBank/DDBJ databases">
        <title>Complete sequence of Shewanella frigidimarina NCIMB 400.</title>
        <authorList>
            <consortium name="US DOE Joint Genome Institute"/>
            <person name="Copeland A."/>
            <person name="Lucas S."/>
            <person name="Lapidus A."/>
            <person name="Barry K."/>
            <person name="Detter J.C."/>
            <person name="Glavina del Rio T."/>
            <person name="Hammon N."/>
            <person name="Israni S."/>
            <person name="Dalin E."/>
            <person name="Tice H."/>
            <person name="Pitluck S."/>
            <person name="Fredrickson J.K."/>
            <person name="Kolker E."/>
            <person name="McCuel L.A."/>
            <person name="DiChristina T."/>
            <person name="Nealson K.H."/>
            <person name="Newman D."/>
            <person name="Tiedje J.M."/>
            <person name="Zhou J."/>
            <person name="Romine M.F."/>
            <person name="Culley D.E."/>
            <person name="Serres M."/>
            <person name="Chertkov O."/>
            <person name="Brettin T."/>
            <person name="Bruce D."/>
            <person name="Han C."/>
            <person name="Tapia R."/>
            <person name="Gilna P."/>
            <person name="Schmutz J."/>
            <person name="Larimer F."/>
            <person name="Land M."/>
            <person name="Hauser L."/>
            <person name="Kyrpides N."/>
            <person name="Mikhailova N."/>
            <person name="Richardson P."/>
        </authorList>
    </citation>
    <scope>NUCLEOTIDE SEQUENCE [LARGE SCALE GENOMIC DNA]</scope>
    <source>
        <strain>NCIMB 400</strain>
    </source>
</reference>
<sequence length="493" mass="55633">MSFKDLRSFIDHLEKNGELKRISYPVDPHLEMTEIADRVLRSGGPALLFENPTNHTMPVLVNLFGTPKRVAMALGKDDPLALREVGELLAFLKEPEPPTGFKDAIAKIPMYKQALNMPPKTVRNPPCQQVVKTGDEVDLTSLPIQHCWPGDVAPLVTWGLTITKGPRQKRQNLGIYRQQLLSKNKLIMRWLDHRGGALDFKDFKQLHPGERYPVVVALGSDPVTILGAVTPVPDSMSEYAFAGLLRGERTEVCKAISCDLEVPATSEIILEGYIDPEETAVEGPYGDHTGYYNETDSFPVFTVTHITHRKDAIYHSTYTGRPPDEPAMLGVALNEVFVPILRKQYPEIIDFYLPPEGCSYRMAVISIRKQYPGHAKRVMMGAWSFLRQFMYTKFIVVVDDDVNCRDWQDVIWAITTRMDPIRDTMMVDNTPIDYLDFASPVAGLGSKMGLDATNKWPGETTREWGTPIVMDEKTKQRIDQIWDDLGIQDMPTL</sequence>
<accession>Q07XN9</accession>
<evidence type="ECO:0000255" key="1">
    <source>
        <dbReference type="HAMAP-Rule" id="MF_01636"/>
    </source>
</evidence>
<organism>
    <name type="scientific">Shewanella frigidimarina (strain NCIMB 400)</name>
    <dbReference type="NCBI Taxonomy" id="318167"/>
    <lineage>
        <taxon>Bacteria</taxon>
        <taxon>Pseudomonadati</taxon>
        <taxon>Pseudomonadota</taxon>
        <taxon>Gammaproteobacteria</taxon>
        <taxon>Alteromonadales</taxon>
        <taxon>Shewanellaceae</taxon>
        <taxon>Shewanella</taxon>
    </lineage>
</organism>
<protein>
    <recommendedName>
        <fullName evidence="1">3-octaprenyl-4-hydroxybenzoate carboxy-lyase</fullName>
        <ecNumber evidence="1">4.1.1.98</ecNumber>
    </recommendedName>
    <alternativeName>
        <fullName evidence="1">Polyprenyl p-hydroxybenzoate decarboxylase</fullName>
    </alternativeName>
</protein>
<comment type="function">
    <text evidence="1">Catalyzes the decarboxylation of 3-octaprenyl-4-hydroxy benzoate to 2-octaprenylphenol, an intermediate step in ubiquinone biosynthesis.</text>
</comment>
<comment type="catalytic activity">
    <reaction evidence="1">
        <text>a 4-hydroxy-3-(all-trans-polyprenyl)benzoate + H(+) = a 2-(all-trans-polyprenyl)phenol + CO2</text>
        <dbReference type="Rhea" id="RHEA:41680"/>
        <dbReference type="Rhea" id="RHEA-COMP:9514"/>
        <dbReference type="Rhea" id="RHEA-COMP:9516"/>
        <dbReference type="ChEBI" id="CHEBI:1269"/>
        <dbReference type="ChEBI" id="CHEBI:15378"/>
        <dbReference type="ChEBI" id="CHEBI:16526"/>
        <dbReference type="ChEBI" id="CHEBI:78396"/>
        <dbReference type="EC" id="4.1.1.98"/>
    </reaction>
</comment>
<comment type="cofactor">
    <cofactor evidence="1">
        <name>prenylated FMN</name>
        <dbReference type="ChEBI" id="CHEBI:87746"/>
    </cofactor>
    <text evidence="1">Binds 1 prenylated FMN per subunit.</text>
</comment>
<comment type="cofactor">
    <cofactor evidence="1">
        <name>Mn(2+)</name>
        <dbReference type="ChEBI" id="CHEBI:29035"/>
    </cofactor>
</comment>
<comment type="pathway">
    <text evidence="1">Cofactor biosynthesis; ubiquinone biosynthesis.</text>
</comment>
<comment type="subunit">
    <text evidence="1">Homohexamer.</text>
</comment>
<comment type="subcellular location">
    <subcellularLocation>
        <location evidence="1">Cell membrane</location>
        <topology evidence="1">Peripheral membrane protein</topology>
    </subcellularLocation>
</comment>
<comment type="similarity">
    <text evidence="1">Belongs to the UbiD family.</text>
</comment>
<feature type="chain" id="PRO_0000267695" description="3-octaprenyl-4-hydroxybenzoate carboxy-lyase">
    <location>
        <begin position="1"/>
        <end position="493"/>
    </location>
</feature>
<feature type="active site" description="Proton donor" evidence="1">
    <location>
        <position position="287"/>
    </location>
</feature>
<feature type="binding site" evidence="1">
    <location>
        <position position="172"/>
    </location>
    <ligand>
        <name>Mn(2+)</name>
        <dbReference type="ChEBI" id="CHEBI:29035"/>
    </ligand>
</feature>
<feature type="binding site" evidence="1">
    <location>
        <begin position="175"/>
        <end position="177"/>
    </location>
    <ligand>
        <name>prenylated FMN</name>
        <dbReference type="ChEBI" id="CHEBI:87746"/>
    </ligand>
</feature>
<feature type="binding site" evidence="1">
    <location>
        <begin position="189"/>
        <end position="191"/>
    </location>
    <ligand>
        <name>prenylated FMN</name>
        <dbReference type="ChEBI" id="CHEBI:87746"/>
    </ligand>
</feature>
<feature type="binding site" evidence="1">
    <location>
        <begin position="194"/>
        <end position="195"/>
    </location>
    <ligand>
        <name>prenylated FMN</name>
        <dbReference type="ChEBI" id="CHEBI:87746"/>
    </ligand>
</feature>
<feature type="binding site" evidence="1">
    <location>
        <position position="238"/>
    </location>
    <ligand>
        <name>Mn(2+)</name>
        <dbReference type="ChEBI" id="CHEBI:29035"/>
    </ligand>
</feature>
<gene>
    <name evidence="1" type="primary">ubiD</name>
    <name type="ordered locus">Sfri_3389</name>
</gene>
<proteinExistence type="inferred from homology"/>
<name>UBID_SHEFN</name>
<dbReference type="EC" id="4.1.1.98" evidence="1"/>
<dbReference type="EMBL" id="CP000447">
    <property type="protein sequence ID" value="ABI73225.1"/>
    <property type="molecule type" value="Genomic_DNA"/>
</dbReference>
<dbReference type="RefSeq" id="WP_011638826.1">
    <property type="nucleotide sequence ID" value="NC_008345.1"/>
</dbReference>
<dbReference type="SMR" id="Q07XN9"/>
<dbReference type="STRING" id="318167.Sfri_3389"/>
<dbReference type="KEGG" id="sfr:Sfri_3389"/>
<dbReference type="eggNOG" id="COG0043">
    <property type="taxonomic scope" value="Bacteria"/>
</dbReference>
<dbReference type="HOGENOM" id="CLU_023348_4_1_6"/>
<dbReference type="OrthoDB" id="9809841at2"/>
<dbReference type="UniPathway" id="UPA00232"/>
<dbReference type="Proteomes" id="UP000000684">
    <property type="component" value="Chromosome"/>
</dbReference>
<dbReference type="GO" id="GO:0005829">
    <property type="term" value="C:cytosol"/>
    <property type="evidence" value="ECO:0007669"/>
    <property type="project" value="TreeGrafter"/>
</dbReference>
<dbReference type="GO" id="GO:0005886">
    <property type="term" value="C:plasma membrane"/>
    <property type="evidence" value="ECO:0007669"/>
    <property type="project" value="UniProtKB-SubCell"/>
</dbReference>
<dbReference type="GO" id="GO:0008694">
    <property type="term" value="F:3-octaprenyl-4-hydroxybenzoate carboxy-lyase activity"/>
    <property type="evidence" value="ECO:0007669"/>
    <property type="project" value="UniProtKB-UniRule"/>
</dbReference>
<dbReference type="GO" id="GO:0046872">
    <property type="term" value="F:metal ion binding"/>
    <property type="evidence" value="ECO:0007669"/>
    <property type="project" value="UniProtKB-KW"/>
</dbReference>
<dbReference type="GO" id="GO:0006744">
    <property type="term" value="P:ubiquinone biosynthetic process"/>
    <property type="evidence" value="ECO:0007669"/>
    <property type="project" value="UniProtKB-UniRule"/>
</dbReference>
<dbReference type="FunFam" id="1.20.5.570:FF:000001">
    <property type="entry name" value="3-octaprenyl-4-hydroxybenzoate carboxy-lyase"/>
    <property type="match status" value="1"/>
</dbReference>
<dbReference type="FunFam" id="3.40.1670.10:FF:000001">
    <property type="entry name" value="3-octaprenyl-4-hydroxybenzoate carboxy-lyase"/>
    <property type="match status" value="1"/>
</dbReference>
<dbReference type="Gene3D" id="1.20.5.570">
    <property type="entry name" value="Single helix bin"/>
    <property type="match status" value="1"/>
</dbReference>
<dbReference type="Gene3D" id="3.40.1670.10">
    <property type="entry name" value="UbiD C-terminal domain-like"/>
    <property type="match status" value="1"/>
</dbReference>
<dbReference type="HAMAP" id="MF_01636">
    <property type="entry name" value="UbiD"/>
    <property type="match status" value="1"/>
</dbReference>
<dbReference type="InterPro" id="IPR002830">
    <property type="entry name" value="UbiD"/>
</dbReference>
<dbReference type="InterPro" id="IPR049381">
    <property type="entry name" value="UbiD-like_C"/>
</dbReference>
<dbReference type="InterPro" id="IPR049383">
    <property type="entry name" value="UbiD-like_N"/>
</dbReference>
<dbReference type="InterPro" id="IPR023677">
    <property type="entry name" value="UbiD_bacteria"/>
</dbReference>
<dbReference type="InterPro" id="IPR048304">
    <property type="entry name" value="UbiD_Rift_dom"/>
</dbReference>
<dbReference type="NCBIfam" id="NF008175">
    <property type="entry name" value="PRK10922.1"/>
    <property type="match status" value="1"/>
</dbReference>
<dbReference type="NCBIfam" id="TIGR00148">
    <property type="entry name" value="UbiD family decarboxylase"/>
    <property type="match status" value="1"/>
</dbReference>
<dbReference type="PANTHER" id="PTHR30108">
    <property type="entry name" value="3-OCTAPRENYL-4-HYDROXYBENZOATE CARBOXY-LYASE-RELATED"/>
    <property type="match status" value="1"/>
</dbReference>
<dbReference type="PANTHER" id="PTHR30108:SF17">
    <property type="entry name" value="FERULIC ACID DECARBOXYLASE 1"/>
    <property type="match status" value="1"/>
</dbReference>
<dbReference type="Pfam" id="PF01977">
    <property type="entry name" value="UbiD"/>
    <property type="match status" value="1"/>
</dbReference>
<dbReference type="Pfam" id="PF20696">
    <property type="entry name" value="UbiD_C"/>
    <property type="match status" value="1"/>
</dbReference>
<dbReference type="Pfam" id="PF20695">
    <property type="entry name" value="UbiD_N"/>
    <property type="match status" value="1"/>
</dbReference>
<dbReference type="SUPFAM" id="SSF50475">
    <property type="entry name" value="FMN-binding split barrel"/>
    <property type="match status" value="1"/>
</dbReference>
<dbReference type="SUPFAM" id="SSF143968">
    <property type="entry name" value="UbiD C-terminal domain-like"/>
    <property type="match status" value="1"/>
</dbReference>